<keyword id="KW-0010">Activator</keyword>
<keyword id="KW-0175">Coiled coil</keyword>
<keyword id="KW-0539">Nucleus</keyword>
<keyword id="KW-0804">Transcription</keyword>
<keyword id="KW-0805">Transcription regulation</keyword>
<protein>
    <recommendedName>
        <fullName>Mediator of RNA polymerase II transcription subunit 4</fullName>
    </recommendedName>
    <alternativeName>
        <fullName>Mediator complex subunit 4</fullName>
    </alternativeName>
</protein>
<gene>
    <name type="primary">MED4</name>
    <name type="ORF">SNOG_02574</name>
</gene>
<dbReference type="EMBL" id="CH445328">
    <property type="protein sequence ID" value="EAT89305.2"/>
    <property type="status" value="ALT_SEQ"/>
    <property type="molecule type" value="Genomic_DNA"/>
</dbReference>
<dbReference type="RefSeq" id="XP_001793177.1">
    <property type="nucleotide sequence ID" value="XM_001793125.1"/>
</dbReference>
<dbReference type="SMR" id="Q0V090"/>
<dbReference type="FunCoup" id="Q0V090">
    <property type="interactions" value="203"/>
</dbReference>
<dbReference type="STRING" id="321614.Q0V090"/>
<dbReference type="GeneID" id="5970034"/>
<dbReference type="KEGG" id="pno:SNOG_02574"/>
<dbReference type="VEuPathDB" id="FungiDB:JI435_301750"/>
<dbReference type="eggNOG" id="KOG2688">
    <property type="taxonomic scope" value="Eukaryota"/>
</dbReference>
<dbReference type="InParanoid" id="Q0V090"/>
<dbReference type="OMA" id="WYPWPSN"/>
<dbReference type="OrthoDB" id="1929813at2759"/>
<dbReference type="Proteomes" id="UP000001055">
    <property type="component" value="Unassembled WGS sequence"/>
</dbReference>
<dbReference type="GO" id="GO:0016592">
    <property type="term" value="C:mediator complex"/>
    <property type="evidence" value="ECO:0007669"/>
    <property type="project" value="InterPro"/>
</dbReference>
<dbReference type="GO" id="GO:0003712">
    <property type="term" value="F:transcription coregulator activity"/>
    <property type="evidence" value="ECO:0007669"/>
    <property type="project" value="InterPro"/>
</dbReference>
<dbReference type="GO" id="GO:0006357">
    <property type="term" value="P:regulation of transcription by RNA polymerase II"/>
    <property type="evidence" value="ECO:0007669"/>
    <property type="project" value="InterPro"/>
</dbReference>
<dbReference type="InterPro" id="IPR019258">
    <property type="entry name" value="Mediator_Med4"/>
</dbReference>
<dbReference type="Pfam" id="PF10018">
    <property type="entry name" value="Med4"/>
    <property type="match status" value="1"/>
</dbReference>
<reference key="1">
    <citation type="journal article" date="2007" name="Plant Cell">
        <title>Dothideomycete-plant interactions illuminated by genome sequencing and EST analysis of the wheat pathogen Stagonospora nodorum.</title>
        <authorList>
            <person name="Hane J.K."/>
            <person name="Lowe R.G.T."/>
            <person name="Solomon P.S."/>
            <person name="Tan K.-C."/>
            <person name="Schoch C.L."/>
            <person name="Spatafora J.W."/>
            <person name="Crous P.W."/>
            <person name="Kodira C.D."/>
            <person name="Birren B.W."/>
            <person name="Galagan J.E."/>
            <person name="Torriani S.F.F."/>
            <person name="McDonald B.A."/>
            <person name="Oliver R.P."/>
        </authorList>
    </citation>
    <scope>NUCLEOTIDE SEQUENCE [LARGE SCALE GENOMIC DNA]</scope>
    <source>
        <strain>SN15 / ATCC MYA-4574 / FGSC 10173</strain>
    </source>
</reference>
<evidence type="ECO:0000250" key="1"/>
<evidence type="ECO:0000255" key="2"/>
<evidence type="ECO:0000256" key="3">
    <source>
        <dbReference type="SAM" id="MobiDB-lite"/>
    </source>
</evidence>
<evidence type="ECO:0000305" key="4"/>
<comment type="function">
    <text evidence="1">Component of the Mediator complex, a coactivator involved in the regulated transcription of nearly all RNA polymerase II-dependent genes. Mediator functions as a bridge to convey information from gene-specific regulatory proteins to the basal RNA polymerase II transcription machinery. Mediator is recruited to promoters by direct interactions with regulatory proteins and serves as a scaffold for the assembly of a functional preinitiation complex with RNA polymerase II and the general transcription factors (By similarity).</text>
</comment>
<comment type="subunit">
    <text evidence="1">Component of the Mediator complex.</text>
</comment>
<comment type="subcellular location">
    <subcellularLocation>
        <location evidence="1">Nucleus</location>
    </subcellularLocation>
</comment>
<comment type="similarity">
    <text evidence="4">Belongs to the Mediator complex subunit 4 family.</text>
</comment>
<comment type="sequence caution" evidence="4">
    <conflict type="erroneous gene model prediction">
        <sequence resource="EMBL-CDS" id="EAT89305"/>
    </conflict>
</comment>
<proteinExistence type="inferred from homology"/>
<sequence length="278" mass="30840">MEDVLSTHFDRIEKALSTLVDSIAAYNPSPQAAIDLVAADDQLSHGLDQLSRHQANHARILTLRAQVEALEEQKKSSVTALATLRHELHATPATSFPADTRPVRFDELLQYAKNISQYTVPPTYRERAPEAASDKDRDKDDAASSGVNTPAHAPAQPDSDAPKDRDNADNKPAEVTAEEEEWLEKLQKSQIAWYPWPSEEKIRIGNLSKLMYWQARGKDVDDFDIPAHEEAQRKGLAGVVEAPPEPEPVAEPVQAQAPRPARPAQPQATFDMFDDLDD</sequence>
<organism>
    <name type="scientific">Phaeosphaeria nodorum (strain SN15 / ATCC MYA-4574 / FGSC 10173)</name>
    <name type="common">Glume blotch fungus</name>
    <name type="synonym">Parastagonospora nodorum</name>
    <dbReference type="NCBI Taxonomy" id="321614"/>
    <lineage>
        <taxon>Eukaryota</taxon>
        <taxon>Fungi</taxon>
        <taxon>Dikarya</taxon>
        <taxon>Ascomycota</taxon>
        <taxon>Pezizomycotina</taxon>
        <taxon>Dothideomycetes</taxon>
        <taxon>Pleosporomycetidae</taxon>
        <taxon>Pleosporales</taxon>
        <taxon>Pleosporineae</taxon>
        <taxon>Phaeosphaeriaceae</taxon>
        <taxon>Parastagonospora</taxon>
    </lineage>
</organism>
<feature type="chain" id="PRO_0000302079" description="Mediator of RNA polymerase II transcription subunit 4">
    <location>
        <begin position="1"/>
        <end position="278"/>
    </location>
</feature>
<feature type="region of interest" description="Disordered" evidence="3">
    <location>
        <begin position="120"/>
        <end position="181"/>
    </location>
</feature>
<feature type="region of interest" description="Disordered" evidence="3">
    <location>
        <begin position="240"/>
        <end position="278"/>
    </location>
</feature>
<feature type="coiled-coil region" evidence="2">
    <location>
        <begin position="57"/>
        <end position="88"/>
    </location>
</feature>
<feature type="compositionally biased region" description="Basic and acidic residues" evidence="3">
    <location>
        <begin position="124"/>
        <end position="142"/>
    </location>
</feature>
<feature type="compositionally biased region" description="Basic and acidic residues" evidence="3">
    <location>
        <begin position="160"/>
        <end position="172"/>
    </location>
</feature>
<feature type="compositionally biased region" description="Low complexity" evidence="3">
    <location>
        <begin position="250"/>
        <end position="268"/>
    </location>
</feature>
<accession>Q0V090</accession>
<name>MED4_PHANO</name>